<dbReference type="EC" id="2.7.4.25" evidence="1"/>
<dbReference type="EMBL" id="BA000017">
    <property type="protein sequence ID" value="BAB57640.1"/>
    <property type="molecule type" value="Genomic_DNA"/>
</dbReference>
<dbReference type="RefSeq" id="WP_000644391.1">
    <property type="nucleotide sequence ID" value="NC_002758.2"/>
</dbReference>
<dbReference type="SMR" id="P63805"/>
<dbReference type="KEGG" id="sav:SAV1478"/>
<dbReference type="HOGENOM" id="CLU_079959_0_2_9"/>
<dbReference type="PhylomeDB" id="P63805"/>
<dbReference type="Proteomes" id="UP000002481">
    <property type="component" value="Chromosome"/>
</dbReference>
<dbReference type="GO" id="GO:0005829">
    <property type="term" value="C:cytosol"/>
    <property type="evidence" value="ECO:0007669"/>
    <property type="project" value="TreeGrafter"/>
</dbReference>
<dbReference type="GO" id="GO:0005524">
    <property type="term" value="F:ATP binding"/>
    <property type="evidence" value="ECO:0007669"/>
    <property type="project" value="UniProtKB-UniRule"/>
</dbReference>
<dbReference type="GO" id="GO:0036430">
    <property type="term" value="F:CMP kinase activity"/>
    <property type="evidence" value="ECO:0007669"/>
    <property type="project" value="RHEA"/>
</dbReference>
<dbReference type="GO" id="GO:0036431">
    <property type="term" value="F:dCMP kinase activity"/>
    <property type="evidence" value="ECO:0007669"/>
    <property type="project" value="RHEA"/>
</dbReference>
<dbReference type="GO" id="GO:0015949">
    <property type="term" value="P:nucleobase-containing small molecule interconversion"/>
    <property type="evidence" value="ECO:0007669"/>
    <property type="project" value="TreeGrafter"/>
</dbReference>
<dbReference type="GO" id="GO:0006220">
    <property type="term" value="P:pyrimidine nucleotide metabolic process"/>
    <property type="evidence" value="ECO:0007669"/>
    <property type="project" value="UniProtKB-UniRule"/>
</dbReference>
<dbReference type="CDD" id="cd02020">
    <property type="entry name" value="CMPK"/>
    <property type="match status" value="1"/>
</dbReference>
<dbReference type="Gene3D" id="3.40.50.300">
    <property type="entry name" value="P-loop containing nucleotide triphosphate hydrolases"/>
    <property type="match status" value="1"/>
</dbReference>
<dbReference type="HAMAP" id="MF_00238">
    <property type="entry name" value="Cytidyl_kinase_type1"/>
    <property type="match status" value="1"/>
</dbReference>
<dbReference type="InterPro" id="IPR003136">
    <property type="entry name" value="Cytidylate_kin"/>
</dbReference>
<dbReference type="InterPro" id="IPR011994">
    <property type="entry name" value="Cytidylate_kinase_dom"/>
</dbReference>
<dbReference type="InterPro" id="IPR027417">
    <property type="entry name" value="P-loop_NTPase"/>
</dbReference>
<dbReference type="NCBIfam" id="TIGR00017">
    <property type="entry name" value="cmk"/>
    <property type="match status" value="1"/>
</dbReference>
<dbReference type="PANTHER" id="PTHR21299:SF2">
    <property type="entry name" value="CYTIDYLATE KINASE"/>
    <property type="match status" value="1"/>
</dbReference>
<dbReference type="PANTHER" id="PTHR21299">
    <property type="entry name" value="CYTIDYLATE KINASE/PANTOATE-BETA-ALANINE LIGASE"/>
    <property type="match status" value="1"/>
</dbReference>
<dbReference type="Pfam" id="PF02224">
    <property type="entry name" value="Cytidylate_kin"/>
    <property type="match status" value="1"/>
</dbReference>
<dbReference type="SUPFAM" id="SSF52540">
    <property type="entry name" value="P-loop containing nucleoside triphosphate hydrolases"/>
    <property type="match status" value="1"/>
</dbReference>
<evidence type="ECO:0000255" key="1">
    <source>
        <dbReference type="HAMAP-Rule" id="MF_00238"/>
    </source>
</evidence>
<gene>
    <name evidence="1" type="primary">cmk</name>
    <name type="ordered locus">SAV1478</name>
</gene>
<comment type="catalytic activity">
    <reaction evidence="1">
        <text>CMP + ATP = CDP + ADP</text>
        <dbReference type="Rhea" id="RHEA:11600"/>
        <dbReference type="ChEBI" id="CHEBI:30616"/>
        <dbReference type="ChEBI" id="CHEBI:58069"/>
        <dbReference type="ChEBI" id="CHEBI:60377"/>
        <dbReference type="ChEBI" id="CHEBI:456216"/>
        <dbReference type="EC" id="2.7.4.25"/>
    </reaction>
</comment>
<comment type="catalytic activity">
    <reaction evidence="1">
        <text>dCMP + ATP = dCDP + ADP</text>
        <dbReference type="Rhea" id="RHEA:25094"/>
        <dbReference type="ChEBI" id="CHEBI:30616"/>
        <dbReference type="ChEBI" id="CHEBI:57566"/>
        <dbReference type="ChEBI" id="CHEBI:58593"/>
        <dbReference type="ChEBI" id="CHEBI:456216"/>
        <dbReference type="EC" id="2.7.4.25"/>
    </reaction>
</comment>
<comment type="subcellular location">
    <subcellularLocation>
        <location evidence="1">Cytoplasm</location>
    </subcellularLocation>
</comment>
<comment type="similarity">
    <text evidence="1">Belongs to the cytidylate kinase family. Type 1 subfamily.</text>
</comment>
<protein>
    <recommendedName>
        <fullName evidence="1">Cytidylate kinase</fullName>
        <shortName evidence="1">CK</shortName>
        <ecNumber evidence="1">2.7.4.25</ecNumber>
    </recommendedName>
    <alternativeName>
        <fullName evidence="1">Cytidine monophosphate kinase</fullName>
        <shortName evidence="1">CMP kinase</shortName>
    </alternativeName>
</protein>
<reference key="1">
    <citation type="journal article" date="2001" name="Lancet">
        <title>Whole genome sequencing of meticillin-resistant Staphylococcus aureus.</title>
        <authorList>
            <person name="Kuroda M."/>
            <person name="Ohta T."/>
            <person name="Uchiyama I."/>
            <person name="Baba T."/>
            <person name="Yuzawa H."/>
            <person name="Kobayashi I."/>
            <person name="Cui L."/>
            <person name="Oguchi A."/>
            <person name="Aoki K."/>
            <person name="Nagai Y."/>
            <person name="Lian J.-Q."/>
            <person name="Ito T."/>
            <person name="Kanamori M."/>
            <person name="Matsumaru H."/>
            <person name="Maruyama A."/>
            <person name="Murakami H."/>
            <person name="Hosoyama A."/>
            <person name="Mizutani-Ui Y."/>
            <person name="Takahashi N.K."/>
            <person name="Sawano T."/>
            <person name="Inoue R."/>
            <person name="Kaito C."/>
            <person name="Sekimizu K."/>
            <person name="Hirakawa H."/>
            <person name="Kuhara S."/>
            <person name="Goto S."/>
            <person name="Yabuzaki J."/>
            <person name="Kanehisa M."/>
            <person name="Yamashita A."/>
            <person name="Oshima K."/>
            <person name="Furuya K."/>
            <person name="Yoshino C."/>
            <person name="Shiba T."/>
            <person name="Hattori M."/>
            <person name="Ogasawara N."/>
            <person name="Hayashi H."/>
            <person name="Hiramatsu K."/>
        </authorList>
    </citation>
    <scope>NUCLEOTIDE SEQUENCE [LARGE SCALE GENOMIC DNA]</scope>
    <source>
        <strain>Mu50 / ATCC 700699</strain>
    </source>
</reference>
<name>KCY_STAAM</name>
<sequence>MKAINIALDGPAAAGKSTIAKRVASELSMIYVDTGAMYRALTYKYLKLNKTEDFAKLVDQTTLDLTYKADKGQCVILDNEDVTDFLRNNDVTQHVSYVASKEPVRSFAVKKQKELAAEKGIVMDGRDIGTVVLPDADLKVYMIASVEERAERRYKDNQLRGIESNFEDLKRDIEARDQYDMNREISPLRKADDAVTLDTTGKSIEEVTDEILAMVSQIK</sequence>
<feature type="chain" id="PRO_0000131973" description="Cytidylate kinase">
    <location>
        <begin position="1"/>
        <end position="219"/>
    </location>
</feature>
<feature type="binding site" evidence="1">
    <location>
        <begin position="10"/>
        <end position="18"/>
    </location>
    <ligand>
        <name>ATP</name>
        <dbReference type="ChEBI" id="CHEBI:30616"/>
    </ligand>
</feature>
<organism>
    <name type="scientific">Staphylococcus aureus (strain Mu50 / ATCC 700699)</name>
    <dbReference type="NCBI Taxonomy" id="158878"/>
    <lineage>
        <taxon>Bacteria</taxon>
        <taxon>Bacillati</taxon>
        <taxon>Bacillota</taxon>
        <taxon>Bacilli</taxon>
        <taxon>Bacillales</taxon>
        <taxon>Staphylococcaceae</taxon>
        <taxon>Staphylococcus</taxon>
    </lineage>
</organism>
<accession>P63805</accession>
<accession>Q99U12</accession>
<keyword id="KW-0067">ATP-binding</keyword>
<keyword id="KW-0963">Cytoplasm</keyword>
<keyword id="KW-0418">Kinase</keyword>
<keyword id="KW-0547">Nucleotide-binding</keyword>
<keyword id="KW-0808">Transferase</keyword>
<proteinExistence type="inferred from homology"/>